<protein>
    <recommendedName>
        <fullName evidence="1">NH(3)-dependent NAD(+) synthetase</fullName>
        <ecNumber evidence="1">6.3.1.5</ecNumber>
    </recommendedName>
</protein>
<keyword id="KW-0067">ATP-binding</keyword>
<keyword id="KW-0436">Ligase</keyword>
<keyword id="KW-0460">Magnesium</keyword>
<keyword id="KW-0479">Metal-binding</keyword>
<keyword id="KW-0520">NAD</keyword>
<keyword id="KW-0547">Nucleotide-binding</keyword>
<name>NADE_RHOOB</name>
<comment type="function">
    <text evidence="1">Catalyzes the ATP-dependent amidation of deamido-NAD to form NAD. Uses ammonia as a nitrogen source.</text>
</comment>
<comment type="catalytic activity">
    <reaction evidence="1">
        <text>deamido-NAD(+) + NH4(+) + ATP = AMP + diphosphate + NAD(+) + H(+)</text>
        <dbReference type="Rhea" id="RHEA:21188"/>
        <dbReference type="ChEBI" id="CHEBI:15378"/>
        <dbReference type="ChEBI" id="CHEBI:28938"/>
        <dbReference type="ChEBI" id="CHEBI:30616"/>
        <dbReference type="ChEBI" id="CHEBI:33019"/>
        <dbReference type="ChEBI" id="CHEBI:57540"/>
        <dbReference type="ChEBI" id="CHEBI:58437"/>
        <dbReference type="ChEBI" id="CHEBI:456215"/>
        <dbReference type="EC" id="6.3.1.5"/>
    </reaction>
</comment>
<comment type="pathway">
    <text evidence="1">Cofactor biosynthesis; NAD(+) biosynthesis; NAD(+) from deamido-NAD(+) (ammonia route): step 1/1.</text>
</comment>
<comment type="subunit">
    <text evidence="1">Homodimer.</text>
</comment>
<comment type="similarity">
    <text evidence="1">Belongs to the NAD synthetase family.</text>
</comment>
<feature type="chain" id="PRO_1000191504" description="NH(3)-dependent NAD(+) synthetase">
    <location>
        <begin position="1"/>
        <end position="279"/>
    </location>
</feature>
<feature type="binding site" evidence="1">
    <location>
        <begin position="46"/>
        <end position="53"/>
    </location>
    <ligand>
        <name>ATP</name>
        <dbReference type="ChEBI" id="CHEBI:30616"/>
    </ligand>
</feature>
<feature type="binding site" evidence="1">
    <location>
        <position position="52"/>
    </location>
    <ligand>
        <name>Mg(2+)</name>
        <dbReference type="ChEBI" id="CHEBI:18420"/>
    </ligand>
</feature>
<feature type="binding site" evidence="1">
    <location>
        <position position="145"/>
    </location>
    <ligand>
        <name>deamido-NAD(+)</name>
        <dbReference type="ChEBI" id="CHEBI:58437"/>
    </ligand>
</feature>
<feature type="binding site" evidence="1">
    <location>
        <position position="165"/>
    </location>
    <ligand>
        <name>ATP</name>
        <dbReference type="ChEBI" id="CHEBI:30616"/>
    </ligand>
</feature>
<feature type="binding site" evidence="1">
    <location>
        <position position="170"/>
    </location>
    <ligand>
        <name>Mg(2+)</name>
        <dbReference type="ChEBI" id="CHEBI:18420"/>
    </ligand>
</feature>
<feature type="binding site" evidence="1">
    <location>
        <position position="178"/>
    </location>
    <ligand>
        <name>deamido-NAD(+)</name>
        <dbReference type="ChEBI" id="CHEBI:58437"/>
    </ligand>
</feature>
<feature type="binding site" evidence="1">
    <location>
        <position position="185"/>
    </location>
    <ligand>
        <name>deamido-NAD(+)</name>
        <dbReference type="ChEBI" id="CHEBI:58437"/>
    </ligand>
</feature>
<feature type="binding site" evidence="1">
    <location>
        <position position="194"/>
    </location>
    <ligand>
        <name>ATP</name>
        <dbReference type="ChEBI" id="CHEBI:30616"/>
    </ligand>
</feature>
<feature type="binding site" evidence="1">
    <location>
        <position position="216"/>
    </location>
    <ligand>
        <name>ATP</name>
        <dbReference type="ChEBI" id="CHEBI:30616"/>
    </ligand>
</feature>
<feature type="binding site" evidence="1">
    <location>
        <begin position="265"/>
        <end position="266"/>
    </location>
    <ligand>
        <name>deamido-NAD(+)</name>
        <dbReference type="ChEBI" id="CHEBI:58437"/>
    </ligand>
</feature>
<gene>
    <name evidence="1" type="primary">nadE</name>
    <name type="ordered locus">ROP_64860</name>
</gene>
<evidence type="ECO:0000255" key="1">
    <source>
        <dbReference type="HAMAP-Rule" id="MF_00193"/>
    </source>
</evidence>
<sequence>MANLRAQILEELGAQPTIDAAGEIRTRVQFLKDYLLSTPAKGFVLGISGGQDSTLTGRLAQLAASELREEGHDAEFVAVRLPYGTQADESDAQISLDFIKPDRSVVVNVKPGADATAKESSEALRDIIGDGGELRDFVRGNIKARERMVIQYSIAGQLGYLVVGTDHAAEAITGFFTKFGDGGVDVTPLTGLSKRQGAALLRELGAPESTWKKVPTADLEDDRPALPDEEALGVTYAQIDDYLEGKDVPEDIARKLETMFLNTRHKRTVPVTPLDTWWR</sequence>
<proteinExistence type="inferred from homology"/>
<organism>
    <name type="scientific">Rhodococcus opacus (strain B4)</name>
    <dbReference type="NCBI Taxonomy" id="632772"/>
    <lineage>
        <taxon>Bacteria</taxon>
        <taxon>Bacillati</taxon>
        <taxon>Actinomycetota</taxon>
        <taxon>Actinomycetes</taxon>
        <taxon>Mycobacteriales</taxon>
        <taxon>Nocardiaceae</taxon>
        <taxon>Rhodococcus</taxon>
    </lineage>
</organism>
<reference key="1">
    <citation type="submission" date="2009-03" db="EMBL/GenBank/DDBJ databases">
        <title>Comparison of the complete genome sequences of Rhodococcus erythropolis PR4 and Rhodococcus opacus B4.</title>
        <authorList>
            <person name="Takarada H."/>
            <person name="Sekine M."/>
            <person name="Hosoyama A."/>
            <person name="Yamada R."/>
            <person name="Fujisawa T."/>
            <person name="Omata S."/>
            <person name="Shimizu A."/>
            <person name="Tsukatani N."/>
            <person name="Tanikawa S."/>
            <person name="Fujita N."/>
            <person name="Harayama S."/>
        </authorList>
    </citation>
    <scope>NUCLEOTIDE SEQUENCE [LARGE SCALE GENOMIC DNA]</scope>
    <source>
        <strain>B4</strain>
    </source>
</reference>
<dbReference type="EC" id="6.3.1.5" evidence="1"/>
<dbReference type="EMBL" id="AP011115">
    <property type="protein sequence ID" value="BAH54733.1"/>
    <property type="molecule type" value="Genomic_DNA"/>
</dbReference>
<dbReference type="RefSeq" id="WP_015890183.1">
    <property type="nucleotide sequence ID" value="NC_012522.1"/>
</dbReference>
<dbReference type="SMR" id="C1B1N8"/>
<dbReference type="STRING" id="632772.ROP_64860"/>
<dbReference type="KEGG" id="rop:ROP_64860"/>
<dbReference type="PATRIC" id="fig|632772.20.peg.6770"/>
<dbReference type="HOGENOM" id="CLU_059327_3_0_11"/>
<dbReference type="OrthoDB" id="3266517at2"/>
<dbReference type="UniPathway" id="UPA00253">
    <property type="reaction ID" value="UER00333"/>
</dbReference>
<dbReference type="Proteomes" id="UP000002212">
    <property type="component" value="Chromosome"/>
</dbReference>
<dbReference type="GO" id="GO:0005737">
    <property type="term" value="C:cytoplasm"/>
    <property type="evidence" value="ECO:0007669"/>
    <property type="project" value="InterPro"/>
</dbReference>
<dbReference type="GO" id="GO:0005524">
    <property type="term" value="F:ATP binding"/>
    <property type="evidence" value="ECO:0007669"/>
    <property type="project" value="UniProtKB-UniRule"/>
</dbReference>
<dbReference type="GO" id="GO:0004359">
    <property type="term" value="F:glutaminase activity"/>
    <property type="evidence" value="ECO:0007669"/>
    <property type="project" value="InterPro"/>
</dbReference>
<dbReference type="GO" id="GO:0046872">
    <property type="term" value="F:metal ion binding"/>
    <property type="evidence" value="ECO:0007669"/>
    <property type="project" value="UniProtKB-KW"/>
</dbReference>
<dbReference type="GO" id="GO:0003952">
    <property type="term" value="F:NAD+ synthase (glutamine-hydrolyzing) activity"/>
    <property type="evidence" value="ECO:0007669"/>
    <property type="project" value="InterPro"/>
</dbReference>
<dbReference type="GO" id="GO:0008795">
    <property type="term" value="F:NAD+ synthase activity"/>
    <property type="evidence" value="ECO:0007669"/>
    <property type="project" value="UniProtKB-UniRule"/>
</dbReference>
<dbReference type="GO" id="GO:0009435">
    <property type="term" value="P:NAD biosynthetic process"/>
    <property type="evidence" value="ECO:0007669"/>
    <property type="project" value="UniProtKB-UniRule"/>
</dbReference>
<dbReference type="CDD" id="cd00553">
    <property type="entry name" value="NAD_synthase"/>
    <property type="match status" value="1"/>
</dbReference>
<dbReference type="FunFam" id="3.40.50.620:FF:000015">
    <property type="entry name" value="NH(3)-dependent NAD(+) synthetase"/>
    <property type="match status" value="1"/>
</dbReference>
<dbReference type="Gene3D" id="3.40.50.620">
    <property type="entry name" value="HUPs"/>
    <property type="match status" value="1"/>
</dbReference>
<dbReference type="HAMAP" id="MF_00193">
    <property type="entry name" value="NadE_ammonia_dep"/>
    <property type="match status" value="1"/>
</dbReference>
<dbReference type="InterPro" id="IPR022310">
    <property type="entry name" value="NAD/GMP_synthase"/>
</dbReference>
<dbReference type="InterPro" id="IPR003694">
    <property type="entry name" value="NAD_synthase"/>
</dbReference>
<dbReference type="InterPro" id="IPR022926">
    <property type="entry name" value="NH(3)-dep_NAD(+)_synth"/>
</dbReference>
<dbReference type="InterPro" id="IPR014729">
    <property type="entry name" value="Rossmann-like_a/b/a_fold"/>
</dbReference>
<dbReference type="NCBIfam" id="TIGR00552">
    <property type="entry name" value="nadE"/>
    <property type="match status" value="1"/>
</dbReference>
<dbReference type="NCBIfam" id="NF001979">
    <property type="entry name" value="PRK00768.1"/>
    <property type="match status" value="1"/>
</dbReference>
<dbReference type="PANTHER" id="PTHR23090">
    <property type="entry name" value="NH 3 /GLUTAMINE-DEPENDENT NAD + SYNTHETASE"/>
    <property type="match status" value="1"/>
</dbReference>
<dbReference type="PANTHER" id="PTHR23090:SF7">
    <property type="entry name" value="NH(3)-DEPENDENT NAD(+) SYNTHETASE"/>
    <property type="match status" value="1"/>
</dbReference>
<dbReference type="Pfam" id="PF02540">
    <property type="entry name" value="NAD_synthase"/>
    <property type="match status" value="1"/>
</dbReference>
<dbReference type="SUPFAM" id="SSF52402">
    <property type="entry name" value="Adenine nucleotide alpha hydrolases-like"/>
    <property type="match status" value="1"/>
</dbReference>
<accession>C1B1N8</accession>